<feature type="chain" id="PRO_0000180259" description="Polyketide-8 synthase acyl carrier protein 2">
    <location>
        <begin position="1"/>
        <end position="87"/>
    </location>
</feature>
<feature type="domain" description="Carrier" evidence="1">
    <location>
        <begin position="8"/>
        <end position="83"/>
    </location>
</feature>
<feature type="modified residue" description="O-(pantetheine 4'-phosphoryl)serine" evidence="1">
    <location>
        <position position="43"/>
    </location>
</feature>
<comment type="function">
    <text>Acyl carrier protein.</text>
</comment>
<comment type="PTM">
    <text evidence="2">4'-phosphopantetheine is transferred from CoA to a specific serine of the apo-ACP-like protein.</text>
</comment>
<accession>Q93HC3</accession>
<evidence type="ECO:0000255" key="1">
    <source>
        <dbReference type="PROSITE-ProRule" id="PRU00258"/>
    </source>
</evidence>
<evidence type="ECO:0000305" key="2"/>
<sequence>MPETTTTALDKEQLRELVADVLDLDVAEVTDDADFMEDLDVDSLMALEITVRLEKEYGVRLAEAELTSITSLQGTYELLTSKLGDTR</sequence>
<gene>
    <name type="ordered locus">SAV_3656</name>
</gene>
<protein>
    <recommendedName>
        <fullName>Polyketide-8 synthase acyl carrier protein 2</fullName>
        <shortName>ACP 2</shortName>
    </recommendedName>
</protein>
<reference key="1">
    <citation type="journal article" date="2001" name="Proc. Natl. Acad. Sci. U.S.A.">
        <title>Genome sequence of an industrial microorganism Streptomyces avermitilis: deducing the ability of producing secondary metabolites.</title>
        <authorList>
            <person name="Omura S."/>
            <person name="Ikeda H."/>
            <person name="Ishikawa J."/>
            <person name="Hanamoto A."/>
            <person name="Takahashi C."/>
            <person name="Shinose M."/>
            <person name="Takahashi Y."/>
            <person name="Horikawa H."/>
            <person name="Nakazawa H."/>
            <person name="Osonoe T."/>
            <person name="Kikuchi H."/>
            <person name="Shiba T."/>
            <person name="Sakaki Y."/>
            <person name="Hattori M."/>
        </authorList>
    </citation>
    <scope>NUCLEOTIDE SEQUENCE [LARGE SCALE GENOMIC DNA]</scope>
    <source>
        <strain>ATCC 31267 / DSM 46492 / JCM 5070 / NBRC 14893 / NCIMB 12804 / NRRL 8165 / MA-4680</strain>
    </source>
</reference>
<reference key="2">
    <citation type="journal article" date="2003" name="Nat. Biotechnol.">
        <title>Complete genome sequence and comparative analysis of the industrial microorganism Streptomyces avermitilis.</title>
        <authorList>
            <person name="Ikeda H."/>
            <person name="Ishikawa J."/>
            <person name="Hanamoto A."/>
            <person name="Shinose M."/>
            <person name="Kikuchi H."/>
            <person name="Shiba T."/>
            <person name="Sakaki Y."/>
            <person name="Hattori M."/>
            <person name="Omura S."/>
        </authorList>
    </citation>
    <scope>NUCLEOTIDE SEQUENCE [LARGE SCALE GENOMIC DNA]</scope>
    <source>
        <strain>ATCC 31267 / DSM 46492 / JCM 5070 / NBRC 14893 / NCIMB 12804 / NRRL 8165 / MA-4680</strain>
    </source>
</reference>
<proteinExistence type="inferred from homology"/>
<keyword id="KW-0596">Phosphopantetheine</keyword>
<keyword id="KW-0597">Phosphoprotein</keyword>
<keyword id="KW-1185">Reference proteome</keyword>
<organism>
    <name type="scientific">Streptomyces avermitilis (strain ATCC 31267 / DSM 46492 / JCM 5070 / NBRC 14893 / NCIMB 12804 / NRRL 8165 / MA-4680)</name>
    <dbReference type="NCBI Taxonomy" id="227882"/>
    <lineage>
        <taxon>Bacteria</taxon>
        <taxon>Bacillati</taxon>
        <taxon>Actinomycetota</taxon>
        <taxon>Actinomycetes</taxon>
        <taxon>Kitasatosporales</taxon>
        <taxon>Streptomycetaceae</taxon>
        <taxon>Streptomyces</taxon>
    </lineage>
</organism>
<dbReference type="EMBL" id="AB070946">
    <property type="protein sequence ID" value="BAB69265.1"/>
    <property type="molecule type" value="Genomic_DNA"/>
</dbReference>
<dbReference type="EMBL" id="BA000030">
    <property type="protein sequence ID" value="BAC71368.1"/>
    <property type="molecule type" value="Genomic_DNA"/>
</dbReference>
<dbReference type="RefSeq" id="WP_010985087.1">
    <property type="nucleotide sequence ID" value="NZ_JZJK01000090.1"/>
</dbReference>
<dbReference type="SMR" id="Q93HC3"/>
<dbReference type="GeneID" id="41540719"/>
<dbReference type="KEGG" id="sma:SAVERM_3656"/>
<dbReference type="eggNOG" id="COG0236">
    <property type="taxonomic scope" value="Bacteria"/>
</dbReference>
<dbReference type="HOGENOM" id="CLU_108696_7_2_11"/>
<dbReference type="OrthoDB" id="5523836at2"/>
<dbReference type="Proteomes" id="UP000000428">
    <property type="component" value="Chromosome"/>
</dbReference>
<dbReference type="GO" id="GO:0031177">
    <property type="term" value="F:phosphopantetheine binding"/>
    <property type="evidence" value="ECO:0007669"/>
    <property type="project" value="InterPro"/>
</dbReference>
<dbReference type="GO" id="GO:0017000">
    <property type="term" value="P:antibiotic biosynthetic process"/>
    <property type="evidence" value="ECO:0007669"/>
    <property type="project" value="UniProtKB-ARBA"/>
</dbReference>
<dbReference type="GO" id="GO:0044550">
    <property type="term" value="P:secondary metabolite biosynthetic process"/>
    <property type="evidence" value="ECO:0007669"/>
    <property type="project" value="UniProtKB-ARBA"/>
</dbReference>
<dbReference type="Gene3D" id="1.10.1200.10">
    <property type="entry name" value="ACP-like"/>
    <property type="match status" value="1"/>
</dbReference>
<dbReference type="InterPro" id="IPR036736">
    <property type="entry name" value="ACP-like_sf"/>
</dbReference>
<dbReference type="InterPro" id="IPR020806">
    <property type="entry name" value="PKS_PP-bd"/>
</dbReference>
<dbReference type="InterPro" id="IPR009081">
    <property type="entry name" value="PP-bd_ACP"/>
</dbReference>
<dbReference type="Pfam" id="PF00550">
    <property type="entry name" value="PP-binding"/>
    <property type="match status" value="1"/>
</dbReference>
<dbReference type="SMART" id="SM00823">
    <property type="entry name" value="PKS_PP"/>
    <property type="match status" value="1"/>
</dbReference>
<dbReference type="SUPFAM" id="SSF47336">
    <property type="entry name" value="ACP-like"/>
    <property type="match status" value="1"/>
</dbReference>
<dbReference type="PROSITE" id="PS50075">
    <property type="entry name" value="CARRIER"/>
    <property type="match status" value="1"/>
</dbReference>
<name>ACPY_STRAW</name>